<protein>
    <recommendedName>
        <fullName evidence="4">Mannose-1-phosphate guanylyltransferase catalytic subunit beta</fullName>
        <ecNumber evidence="2">2.7.7.13</ecNumber>
    </recommendedName>
    <alternativeName>
        <fullName>GDP-mannose pyrophosphorylase 37-kDa subunit</fullName>
    </alternativeName>
    <alternativeName>
        <fullName>GDP-mannose pyrophosphorylase B</fullName>
    </alternativeName>
    <alternativeName>
        <fullName>GTP-mannose-1-phosphate guanylyltransferase beta</fullName>
    </alternativeName>
</protein>
<name>GMPPB_PIG</name>
<gene>
    <name evidence="1" type="primary">GMPPB</name>
</gene>
<reference key="1">
    <citation type="journal article" date="2000" name="Eur. J. Biochem.">
        <title>Cloning, expression and characterization of the pig liver GDP-mannose pyrophosphorylase. Evidence that GDP-mannose and GDP-Glc pyrophosphorylases are different proteins.</title>
        <authorList>
            <person name="Ning B."/>
            <person name="Elbein A.D."/>
        </authorList>
    </citation>
    <scope>NUCLEOTIDE SEQUENCE [MRNA]</scope>
    <scope>PROTEIN SEQUENCE OF 1-23; 159-170 AND 180-194</scope>
    <scope>FUNCTION</scope>
    <scope>CATALYTIC ACTIVITY</scope>
    <scope>COFACTOR MG2+</scope>
    <scope>BIOPHYSICOCHEMICAL PROPERTIES</scope>
</reference>
<reference key="2">
    <citation type="journal article" date="1993" name="J. Biol. Chem.">
        <title>GDP-mannose pyrophosphorylase. Purification to homogeneity, properties, and utilization to prepare photoaffinity analogs.</title>
        <authorList>
            <person name="Szumilo T."/>
            <person name="Drake R.R."/>
            <person name="York J.L."/>
            <person name="Elbein A.D."/>
        </authorList>
    </citation>
    <scope>PROTEIN SEQUENCE OF 1-23</scope>
    <scope>INTERACTION WITH GMPPA</scope>
</reference>
<feature type="chain" id="PRO_0000307164" description="Mannose-1-phosphate guanylyltransferase catalytic subunit beta">
    <location>
        <begin position="1"/>
        <end position="360"/>
    </location>
</feature>
<feature type="region of interest" description="Substrate-binding domain" evidence="1">
    <location>
        <begin position="2"/>
        <end position="222"/>
    </location>
</feature>
<feature type="region of interest" description="Hexapeptide repeat domain" evidence="1">
    <location>
        <begin position="245"/>
        <end position="360"/>
    </location>
</feature>
<feature type="active site" evidence="1">
    <location>
        <position position="162"/>
    </location>
</feature>
<feature type="binding site" evidence="1">
    <location>
        <position position="110"/>
    </location>
    <ligand>
        <name>GDP-alpha-D-mannose</name>
        <dbReference type="ChEBI" id="CHEBI:57527"/>
    </ligand>
</feature>
<feature type="binding site" evidence="1">
    <location>
        <position position="110"/>
    </location>
    <ligand>
        <name>Mg(2+)</name>
        <dbReference type="ChEBI" id="CHEBI:18420"/>
    </ligand>
</feature>
<feature type="binding site" evidence="1">
    <location>
        <position position="218"/>
    </location>
    <ligand>
        <name>GDP-alpha-D-mannose</name>
        <dbReference type="ChEBI" id="CHEBI:57527"/>
    </ligand>
</feature>
<feature type="binding site" evidence="1">
    <location>
        <position position="218"/>
    </location>
    <ligand>
        <name>Mg(2+)</name>
        <dbReference type="ChEBI" id="CHEBI:18420"/>
    </ligand>
</feature>
<keyword id="KW-0963">Cytoplasm</keyword>
<keyword id="KW-0903">Direct protein sequencing</keyword>
<keyword id="KW-0342">GTP-binding</keyword>
<keyword id="KW-0460">Magnesium</keyword>
<keyword id="KW-0479">Metal-binding</keyword>
<keyword id="KW-0547">Nucleotide-binding</keyword>
<keyword id="KW-0548">Nucleotidyltransferase</keyword>
<keyword id="KW-1185">Reference proteome</keyword>
<keyword id="KW-0808">Transferase</keyword>
<evidence type="ECO:0000250" key="1">
    <source>
        <dbReference type="UniProtKB" id="Q9Y5P6"/>
    </source>
</evidence>
<evidence type="ECO:0000269" key="2">
    <source>
    </source>
</evidence>
<evidence type="ECO:0000269" key="3">
    <source>
    </source>
</evidence>
<evidence type="ECO:0000305" key="4"/>
<organism>
    <name type="scientific">Sus scrofa</name>
    <name type="common">Pig</name>
    <dbReference type="NCBI Taxonomy" id="9823"/>
    <lineage>
        <taxon>Eukaryota</taxon>
        <taxon>Metazoa</taxon>
        <taxon>Chordata</taxon>
        <taxon>Craniata</taxon>
        <taxon>Vertebrata</taxon>
        <taxon>Euteleostomi</taxon>
        <taxon>Mammalia</taxon>
        <taxon>Eutheria</taxon>
        <taxon>Laurasiatheria</taxon>
        <taxon>Artiodactyla</taxon>
        <taxon>Suina</taxon>
        <taxon>Suidae</taxon>
        <taxon>Sus</taxon>
    </lineage>
</organism>
<comment type="function">
    <text evidence="1 2">Catalytic subunit of the GMPPA-GMPPB mannose-1-phosphate guanylyltransferase complex (By similarity). Catalyzes the formation of GDP-mannose, an essential precursor of glycan moieties of glycoproteins and glycolipids (PubMed:11082198). Can catalyze the reverse reaction in vitro (By similarity). Together with GMPPA regulates GDP-alpha-D-mannose levels (By similarity).</text>
</comment>
<comment type="catalytic activity">
    <reaction evidence="2">
        <text>alpha-D-mannose 1-phosphate + GTP + H(+) = GDP-alpha-D-mannose + diphosphate</text>
        <dbReference type="Rhea" id="RHEA:15229"/>
        <dbReference type="ChEBI" id="CHEBI:15378"/>
        <dbReference type="ChEBI" id="CHEBI:33019"/>
        <dbReference type="ChEBI" id="CHEBI:37565"/>
        <dbReference type="ChEBI" id="CHEBI:57527"/>
        <dbReference type="ChEBI" id="CHEBI:58409"/>
        <dbReference type="EC" id="2.7.7.13"/>
    </reaction>
    <physiologicalReaction direction="left-to-right" evidence="2">
        <dbReference type="Rhea" id="RHEA:15230"/>
    </physiologicalReaction>
    <physiologicalReaction direction="right-to-left" evidence="1">
        <dbReference type="Rhea" id="RHEA:15231"/>
    </physiologicalReaction>
</comment>
<comment type="cofactor">
    <cofactor evidence="2">
        <name>Mg(2+)</name>
        <dbReference type="ChEBI" id="CHEBI:18420"/>
    </cofactor>
    <text evidence="1 2 4">Coordinates binding with substrate and required for enzymatic activity (By similarity). Can use both Mg(2+) and Mn(2+) in vitro; recombinant protein shows higher activity with Mn(2+) but native protein with Mg(2+) (PubMed:11082198). Mg(2+) is likely to be the in vivo cofactor (Probable).</text>
</comment>
<comment type="activity regulation">
    <text evidence="1">Enzyme activity is reduced by incorporation into the GMPPA-GMPPB mannose-1-phosphate guanylyltransferase complex. Allosterically inhibited, when part of the GMPPA-GMPPB complex, by GDP-alpha-D-mannose binding to GMPPA.</text>
</comment>
<comment type="biophysicochemical properties">
    <kinetics>
        <KM evidence="2">0.2 mM for mannose-1-phosphate</KM>
        <KM evidence="2">0.36 mM for GTP</KM>
        <KM evidence="2">39 nM for GDP-mannose</KM>
        <Vmax evidence="2">0.56 mmol/min/mg enzyme toward mannose-1-phosphate</Vmax>
        <Vmax evidence="2">14.0 nmol/min/mg enzyme toward GDP-mannose</Vmax>
    </kinetics>
</comment>
<comment type="pathway">
    <text evidence="2">Nucleotide-sugar biosynthesis; GDP-alpha-D-mannose biosynthesis; GDP-alpha-D-mannose from alpha-D-mannose 1-phosphate (GTP route): step 1/1.</text>
</comment>
<comment type="subunit">
    <text evidence="1 3">Component of the GMPPA-GMPPB mannose-1-phosphate guanylyltransferase complex composed of 4 GMPPA subunits and 8 GMPPB subunits; the complex is organized into three layers, a central layer made up of 2 GMPPA dimers sandwiched between two layers each made up of 2 GMPPB dimers (By similarity) (PubMed:7688733). GMPPB catalytic activity is reduced when part of the complex and binding of GDP-alpha-D-Mannose by GMPPA induces allosteric feedback inhibition of GMPPB (By similarity).</text>
</comment>
<comment type="subcellular location">
    <subcellularLocation>
        <location evidence="1">Cytoplasm</location>
    </subcellularLocation>
</comment>
<comment type="tissue specificity">
    <text evidence="2">Expressed in the liver (at protein level).</text>
</comment>
<comment type="domain">
    <text evidence="1">The N-terminal substrate-binding domain adopts a Rossman-like fold and has a binding pocket for GTP or GDP-alpha-D-mannose (By similarity). Substrate binding is coordinated by an Mg(2+) ion (By similarity).</text>
</comment>
<comment type="domain">
    <text evidence="1">The C-terminal domain consists of a series of tandem hexapeptide repeats that adopt a beta-helix conformation (By similarity). The beta-helix forms several protein interaction surfaces involved in assembly of the GMPPA-GMPPB mannose-1-phosphate guanylyltransferase complex (By similarity).</text>
</comment>
<comment type="similarity">
    <text evidence="4">Belongs to the transferase hexapeptide repeat family.</text>
</comment>
<sequence>MKALILVGGYGTRLRPLTLSIPKPLVDFCNKPILLHQVEALASAGVDHVILAVSYMSQMLEKEMKAQEQRLGIRISMSHEEEPLGTAGPLALARDLLSETAEPFFVLNSDVICDFPFQAMVQFHRHHGQEGSILVTKVEEPSKYGVVVCEADTGRIHRFVEKPQVFVSNKINAGMYILSPAVLQRIQLQPTSIEKEIFPVMAKEGQLYAMELQGFWMDIGQPKDFLTGMCLFLQSLRQKQPEQLCSGPGIVGNVLVDPSARIGKNCSIGPNVSLGPGVVVEDGVCIRRCTVLRDARIRSHSWLESCIVCWRCRVGQWVRMENVTVLGEDVIVNDELYLNGASVLPHKSIGESVPEPGIIM</sequence>
<dbReference type="EC" id="2.7.7.13" evidence="2"/>
<dbReference type="SMR" id="P0C5I2"/>
<dbReference type="FunCoup" id="P0C5I2">
    <property type="interactions" value="1245"/>
</dbReference>
<dbReference type="PaxDb" id="9823-ENSSSCP00000012142"/>
<dbReference type="PeptideAtlas" id="P0C5I2"/>
<dbReference type="eggNOG" id="KOG1322">
    <property type="taxonomic scope" value="Eukaryota"/>
</dbReference>
<dbReference type="InParanoid" id="P0C5I2"/>
<dbReference type="SABIO-RK" id="P0C5I2"/>
<dbReference type="UniPathway" id="UPA00126">
    <property type="reaction ID" value="UER00930"/>
</dbReference>
<dbReference type="Proteomes" id="UP000008227">
    <property type="component" value="Unplaced"/>
</dbReference>
<dbReference type="Proteomes" id="UP000314985">
    <property type="component" value="Unplaced"/>
</dbReference>
<dbReference type="Proteomes" id="UP000694570">
    <property type="component" value="Unplaced"/>
</dbReference>
<dbReference type="Proteomes" id="UP000694571">
    <property type="component" value="Unplaced"/>
</dbReference>
<dbReference type="Proteomes" id="UP000694720">
    <property type="component" value="Unplaced"/>
</dbReference>
<dbReference type="Proteomes" id="UP000694722">
    <property type="component" value="Unplaced"/>
</dbReference>
<dbReference type="Proteomes" id="UP000694723">
    <property type="component" value="Unplaced"/>
</dbReference>
<dbReference type="Proteomes" id="UP000694724">
    <property type="component" value="Unplaced"/>
</dbReference>
<dbReference type="Proteomes" id="UP000694725">
    <property type="component" value="Unplaced"/>
</dbReference>
<dbReference type="Proteomes" id="UP000694726">
    <property type="component" value="Unplaced"/>
</dbReference>
<dbReference type="Proteomes" id="UP000694727">
    <property type="component" value="Unplaced"/>
</dbReference>
<dbReference type="Proteomes" id="UP000694728">
    <property type="component" value="Unplaced"/>
</dbReference>
<dbReference type="GO" id="GO:0005737">
    <property type="term" value="C:cytoplasm"/>
    <property type="evidence" value="ECO:0000250"/>
    <property type="project" value="UniProtKB"/>
</dbReference>
<dbReference type="GO" id="GO:0120508">
    <property type="term" value="C:GDP-mannose pyrophosphorylase complex"/>
    <property type="evidence" value="ECO:0000250"/>
    <property type="project" value="FlyBase"/>
</dbReference>
<dbReference type="GO" id="GO:0005525">
    <property type="term" value="F:GTP binding"/>
    <property type="evidence" value="ECO:0007669"/>
    <property type="project" value="UniProtKB-KW"/>
</dbReference>
<dbReference type="GO" id="GO:0004475">
    <property type="term" value="F:mannose-1-phosphate guanylyltransferase (GTP) activity"/>
    <property type="evidence" value="ECO:0000314"/>
    <property type="project" value="MGI"/>
</dbReference>
<dbReference type="GO" id="GO:0046872">
    <property type="term" value="F:metal ion binding"/>
    <property type="evidence" value="ECO:0007669"/>
    <property type="project" value="UniProtKB-KW"/>
</dbReference>
<dbReference type="GO" id="GO:0009298">
    <property type="term" value="P:GDP-mannose biosynthetic process"/>
    <property type="evidence" value="ECO:0000250"/>
    <property type="project" value="UniProtKB"/>
</dbReference>
<dbReference type="GO" id="GO:0006486">
    <property type="term" value="P:protein glycosylation"/>
    <property type="evidence" value="ECO:0000318"/>
    <property type="project" value="GO_Central"/>
</dbReference>
<dbReference type="CDD" id="cd06425">
    <property type="entry name" value="M1P_guanylylT_B_like_N"/>
    <property type="match status" value="1"/>
</dbReference>
<dbReference type="FunFam" id="2.160.10.10:FF:000018">
    <property type="entry name" value="Mannose-1-phosphate guanyltransferase beta"/>
    <property type="match status" value="1"/>
</dbReference>
<dbReference type="FunFam" id="3.90.550.10:FF:000013">
    <property type="entry name" value="mannose-1-phosphate guanyltransferase beta"/>
    <property type="match status" value="1"/>
</dbReference>
<dbReference type="Gene3D" id="2.160.10.10">
    <property type="entry name" value="Hexapeptide repeat proteins"/>
    <property type="match status" value="1"/>
</dbReference>
<dbReference type="Gene3D" id="3.90.550.10">
    <property type="entry name" value="Spore Coat Polysaccharide Biosynthesis Protein SpsA, Chain A"/>
    <property type="match status" value="1"/>
</dbReference>
<dbReference type="InterPro" id="IPR056729">
    <property type="entry name" value="GMPPB_C"/>
</dbReference>
<dbReference type="InterPro" id="IPR045233">
    <property type="entry name" value="GMPPB_N"/>
</dbReference>
<dbReference type="InterPro" id="IPR018357">
    <property type="entry name" value="Hexapep_transf_CS"/>
</dbReference>
<dbReference type="InterPro" id="IPR050486">
    <property type="entry name" value="Mannose-1P_guanyltransferase"/>
</dbReference>
<dbReference type="InterPro" id="IPR005835">
    <property type="entry name" value="NTP_transferase_dom"/>
</dbReference>
<dbReference type="InterPro" id="IPR029044">
    <property type="entry name" value="Nucleotide-diphossugar_trans"/>
</dbReference>
<dbReference type="PANTHER" id="PTHR22572">
    <property type="entry name" value="SUGAR-1-PHOSPHATE GUANYL TRANSFERASE"/>
    <property type="match status" value="1"/>
</dbReference>
<dbReference type="Pfam" id="PF25087">
    <property type="entry name" value="GMPPB_C"/>
    <property type="match status" value="1"/>
</dbReference>
<dbReference type="Pfam" id="PF00483">
    <property type="entry name" value="NTP_transferase"/>
    <property type="match status" value="1"/>
</dbReference>
<dbReference type="SUPFAM" id="SSF53448">
    <property type="entry name" value="Nucleotide-diphospho-sugar transferases"/>
    <property type="match status" value="1"/>
</dbReference>
<dbReference type="PROSITE" id="PS00101">
    <property type="entry name" value="HEXAPEP_TRANSFERASES"/>
    <property type="match status" value="1"/>
</dbReference>
<accession>P0C5I2</accession>
<proteinExistence type="evidence at protein level"/>